<dbReference type="EC" id="3.6.1.-" evidence="1"/>
<dbReference type="EMBL" id="CP000109">
    <property type="protein sequence ID" value="ABB41302.1"/>
    <property type="molecule type" value="Genomic_DNA"/>
</dbReference>
<dbReference type="SMR" id="Q31HS1"/>
<dbReference type="STRING" id="317025.Tcr_0706"/>
<dbReference type="KEGG" id="tcx:Tcr_0706"/>
<dbReference type="eggNOG" id="COG0424">
    <property type="taxonomic scope" value="Bacteria"/>
</dbReference>
<dbReference type="HOGENOM" id="CLU_040416_1_0_6"/>
<dbReference type="OrthoDB" id="9813694at2"/>
<dbReference type="GO" id="GO:0005737">
    <property type="term" value="C:cytoplasm"/>
    <property type="evidence" value="ECO:0007669"/>
    <property type="project" value="UniProtKB-SubCell"/>
</dbReference>
<dbReference type="GO" id="GO:0047429">
    <property type="term" value="F:nucleoside triphosphate diphosphatase activity"/>
    <property type="evidence" value="ECO:0007669"/>
    <property type="project" value="InterPro"/>
</dbReference>
<dbReference type="GO" id="GO:0009117">
    <property type="term" value="P:nucleotide metabolic process"/>
    <property type="evidence" value="ECO:0007669"/>
    <property type="project" value="UniProtKB-KW"/>
</dbReference>
<dbReference type="CDD" id="cd00555">
    <property type="entry name" value="Maf"/>
    <property type="match status" value="1"/>
</dbReference>
<dbReference type="Gene3D" id="3.90.950.10">
    <property type="match status" value="1"/>
</dbReference>
<dbReference type="HAMAP" id="MF_00528">
    <property type="entry name" value="Maf"/>
    <property type="match status" value="1"/>
</dbReference>
<dbReference type="InterPro" id="IPR029001">
    <property type="entry name" value="ITPase-like_fam"/>
</dbReference>
<dbReference type="InterPro" id="IPR003697">
    <property type="entry name" value="Maf-like"/>
</dbReference>
<dbReference type="NCBIfam" id="TIGR00172">
    <property type="entry name" value="maf"/>
    <property type="match status" value="1"/>
</dbReference>
<dbReference type="PANTHER" id="PTHR43213:SF10">
    <property type="entry name" value="7-METHYL-GTP PYROPHOSPHATASE"/>
    <property type="match status" value="1"/>
</dbReference>
<dbReference type="PANTHER" id="PTHR43213">
    <property type="entry name" value="BIFUNCTIONAL DTTP/UTP PYROPHOSPHATASE/METHYLTRANSFERASE PROTEIN-RELATED"/>
    <property type="match status" value="1"/>
</dbReference>
<dbReference type="Pfam" id="PF02545">
    <property type="entry name" value="Maf"/>
    <property type="match status" value="1"/>
</dbReference>
<dbReference type="PIRSF" id="PIRSF006305">
    <property type="entry name" value="Maf"/>
    <property type="match status" value="1"/>
</dbReference>
<dbReference type="SUPFAM" id="SSF52972">
    <property type="entry name" value="ITPase-like"/>
    <property type="match status" value="1"/>
</dbReference>
<feature type="chain" id="PRO_0000267457" description="7-methyl-GTP pyrophosphatase">
    <location>
        <begin position="1"/>
        <end position="200"/>
    </location>
</feature>
<feature type="active site" description="Proton acceptor" evidence="1">
    <location>
        <position position="75"/>
    </location>
</feature>
<feature type="site" description="Important for substrate specificity" evidence="1">
    <location>
        <position position="18"/>
    </location>
</feature>
<feature type="site" description="Important for substrate specificity" evidence="1">
    <location>
        <position position="76"/>
    </location>
</feature>
<feature type="site" description="Important for substrate specificity" evidence="1">
    <location>
        <position position="160"/>
    </location>
</feature>
<name>NTPPB_HYDCU</name>
<reference key="1">
    <citation type="journal article" date="2006" name="PLoS Biol.">
        <title>The genome of deep-sea vent chemolithoautotroph Thiomicrospira crunogena XCL-2.</title>
        <authorList>
            <person name="Scott K.M."/>
            <person name="Sievert S.M."/>
            <person name="Abril F.N."/>
            <person name="Ball L.A."/>
            <person name="Barrett C.J."/>
            <person name="Blake R.A."/>
            <person name="Boller A.J."/>
            <person name="Chain P.S.G."/>
            <person name="Clark J.A."/>
            <person name="Davis C.R."/>
            <person name="Detter C."/>
            <person name="Do K.F."/>
            <person name="Dobrinski K.P."/>
            <person name="Faza B.I."/>
            <person name="Fitzpatrick K.A."/>
            <person name="Freyermuth S.K."/>
            <person name="Harmer T.L."/>
            <person name="Hauser L.J."/>
            <person name="Huegler M."/>
            <person name="Kerfeld C.A."/>
            <person name="Klotz M.G."/>
            <person name="Kong W.W."/>
            <person name="Land M."/>
            <person name="Lapidus A."/>
            <person name="Larimer F.W."/>
            <person name="Longo D.L."/>
            <person name="Lucas S."/>
            <person name="Malfatti S.A."/>
            <person name="Massey S.E."/>
            <person name="Martin D.D."/>
            <person name="McCuddin Z."/>
            <person name="Meyer F."/>
            <person name="Moore J.L."/>
            <person name="Ocampo L.H. Jr."/>
            <person name="Paul J.H."/>
            <person name="Paulsen I.T."/>
            <person name="Reep D.K."/>
            <person name="Ren Q."/>
            <person name="Ross R.L."/>
            <person name="Sato P.Y."/>
            <person name="Thomas P."/>
            <person name="Tinkham L.E."/>
            <person name="Zeruth G.T."/>
        </authorList>
    </citation>
    <scope>NUCLEOTIDE SEQUENCE [LARGE SCALE GENOMIC DNA]</scope>
    <source>
        <strain>DSM 25203 / XCL-2</strain>
    </source>
</reference>
<proteinExistence type="inferred from homology"/>
<accession>Q31HS1</accession>
<organism>
    <name type="scientific">Hydrogenovibrio crunogenus (strain DSM 25203 / XCL-2)</name>
    <name type="common">Thiomicrospira crunogena</name>
    <dbReference type="NCBI Taxonomy" id="317025"/>
    <lineage>
        <taxon>Bacteria</taxon>
        <taxon>Pseudomonadati</taxon>
        <taxon>Pseudomonadota</taxon>
        <taxon>Gammaproteobacteria</taxon>
        <taxon>Thiotrichales</taxon>
        <taxon>Piscirickettsiaceae</taxon>
        <taxon>Hydrogenovibrio</taxon>
    </lineage>
</organism>
<protein>
    <recommendedName>
        <fullName evidence="1">7-methyl-GTP pyrophosphatase</fullName>
        <shortName evidence="1">m(7)GTP pyrophosphatase</shortName>
        <ecNumber evidence="1">3.6.1.-</ecNumber>
    </recommendedName>
</protein>
<gene>
    <name type="ordered locus">Tcr_0706</name>
</gene>
<evidence type="ECO:0000255" key="1">
    <source>
        <dbReference type="HAMAP-Rule" id="MF_00528"/>
    </source>
</evidence>
<comment type="function">
    <text evidence="1">Nucleoside triphosphate pyrophosphatase that hydrolyzes 7-methyl-GTP (m(7)GTP). May have a dual role in cell division arrest and in preventing the incorporation of modified nucleotides into cellular nucleic acids.</text>
</comment>
<comment type="catalytic activity">
    <reaction evidence="1">
        <text>N(7)-methyl-GTP + H2O = N(7)-methyl-GMP + diphosphate + H(+)</text>
        <dbReference type="Rhea" id="RHEA:58744"/>
        <dbReference type="ChEBI" id="CHEBI:15377"/>
        <dbReference type="ChEBI" id="CHEBI:15378"/>
        <dbReference type="ChEBI" id="CHEBI:33019"/>
        <dbReference type="ChEBI" id="CHEBI:58285"/>
        <dbReference type="ChEBI" id="CHEBI:87133"/>
    </reaction>
</comment>
<comment type="cofactor">
    <cofactor evidence="1">
        <name>a divalent metal cation</name>
        <dbReference type="ChEBI" id="CHEBI:60240"/>
    </cofactor>
</comment>
<comment type="subcellular location">
    <subcellularLocation>
        <location evidence="1">Cytoplasm</location>
    </subcellularLocation>
</comment>
<comment type="similarity">
    <text evidence="1">Belongs to the Maf family. YceF subfamily.</text>
</comment>
<keyword id="KW-0963">Cytoplasm</keyword>
<keyword id="KW-0378">Hydrolase</keyword>
<keyword id="KW-0546">Nucleotide metabolism</keyword>
<sequence length="200" mass="22197">MNSTAKLPKIILASTSPFRKALLQKLRLPFITENPAIDETPYPHESVVDMVNRLSLAKAHAVAEKHPNAIIIASDQSATYQGQAVGKPHTYPNAVQQLNQFSGETIHFNTGLVVFDNRTQKTYQTLDVTKVTFRTLSETDIHNYLILEEPYQCAGSFKSEGLGITLFSKIEGKDPNALIGLPLIDLTSFLKQCDIQLPFL</sequence>